<reference key="1">
    <citation type="journal article" date="1986" name="Virology">
        <title>Nucleotide sequence and genetic map of the 16-kb vaccinia virus HindIII D fragment.</title>
        <authorList>
            <person name="Niles E.G."/>
            <person name="Condit R.C."/>
            <person name="Caro P."/>
            <person name="Davidson K."/>
            <person name="Matusick L."/>
            <person name="Seto J."/>
        </authorList>
    </citation>
    <scope>NUCLEOTIDE SEQUENCE [GENOMIC DNA]</scope>
</reference>
<sequence>MIYLITNPPYVELEKYIKCFPLSVCIRLIKYLNLELMFNVTNSSPYNTPLFIFRFGYNSLSCS</sequence>
<proteinExistence type="predicted"/>
<feature type="chain" id="PRO_0000099743" description="Uncharacterized 7.4 kDa protein">
    <location>
        <begin position="1"/>
        <end position="63"/>
    </location>
</feature>
<accession>P04309</accession>
<dbReference type="EMBL" id="M15058">
    <property type="status" value="NOT_ANNOTATED_CDS"/>
    <property type="molecule type" value="Genomic_DNA"/>
</dbReference>
<dbReference type="PIR" id="A03883">
    <property type="entry name" value="QQVZ12"/>
</dbReference>
<organism>
    <name type="scientific">Vaccinia virus (strain Western Reserve)</name>
    <name type="common">VACV</name>
    <name type="synonym">Vaccinia virus (strain WR)</name>
    <dbReference type="NCBI Taxonomy" id="10254"/>
    <lineage>
        <taxon>Viruses</taxon>
        <taxon>Varidnaviria</taxon>
        <taxon>Bamfordvirae</taxon>
        <taxon>Nucleocytoviricota</taxon>
        <taxon>Pokkesviricetes</taxon>
        <taxon>Chitovirales</taxon>
        <taxon>Poxviridae</taxon>
        <taxon>Chordopoxvirinae</taxon>
        <taxon>Orthopoxvirus</taxon>
        <taxon>Vaccinia virus</taxon>
    </lineage>
</organism>
<protein>
    <recommendedName>
        <fullName>Uncharacterized 7.4 kDa protein</fullName>
    </recommendedName>
</protein>
<name>Y7K4_VACCW</name>
<organismHost>
    <name type="scientific">Bos taurus</name>
    <name type="common">Bovine</name>
    <dbReference type="NCBI Taxonomy" id="9913"/>
</organismHost>